<reference key="1">
    <citation type="journal article" date="1988" name="Virology">
        <title>Analysis of a large cluster of nonessential genes deleted from a vaccinia virus terminal transposition mutant.</title>
        <authorList>
            <person name="Kotwal G.J."/>
            <person name="Moss B."/>
        </authorList>
    </citation>
    <scope>NUCLEOTIDE SEQUENCE [GENOMIC DNA]</scope>
</reference>
<reference key="2">
    <citation type="submission" date="2003-02" db="EMBL/GenBank/DDBJ databases">
        <title>Sequencing of the coding region of Vaccinia-WR to an average 9-fold redundancy and an error rate of 0.16/10kb.</title>
        <authorList>
            <person name="Esposito J.J."/>
            <person name="Frace A.M."/>
            <person name="Sammons S.A."/>
            <person name="Olsen-Rasmussen M."/>
            <person name="Osborne J."/>
            <person name="Wohlhueter R."/>
        </authorList>
    </citation>
    <scope>NUCLEOTIDE SEQUENCE [LARGE SCALE GENOMIC DNA]</scope>
</reference>
<reference key="3">
    <citation type="journal article" date="1990" name="Virology">
        <title>Vaccinia virus host range genes.</title>
        <authorList>
            <person name="Perkus M.E."/>
            <person name="Goebel S.J."/>
            <person name="Davis S.W."/>
            <person name="Johnson G.P."/>
            <person name="Limbach K."/>
            <person name="Norton E.K."/>
            <person name="Paoletti E."/>
        </authorList>
    </citation>
    <scope>FUNCTION</scope>
</reference>
<reference key="4">
    <citation type="journal article" date="1993" name="J. Gen. Virol.">
        <title>Detection of a protein encoded by the vaccinia virus C7L open reading frame and study of its effect on virus multiplication in different cell lines.</title>
        <authorList>
            <person name="Oguiura N."/>
            <person name="Spehner D."/>
            <person name="Drillien R."/>
        </authorList>
    </citation>
    <scope>FUNCTION</scope>
</reference>
<reference key="5">
    <citation type="journal article" date="2009" name="J. Virol.">
        <title>Vaccinia virus K1L and C7L inhibit antiviral activities induced by type I interferons.</title>
        <authorList>
            <person name="Meng X."/>
            <person name="Jiang C."/>
            <person name="Arsenio J."/>
            <person name="Dick K."/>
            <person name="Cao J."/>
            <person name="Xiang Y."/>
        </authorList>
    </citation>
    <scope>FUNCTION</scope>
</reference>
<reference key="6">
    <citation type="journal article" date="2015" name="J. Virol.">
        <title>Deciphering poxvirus gene expression by RNA sequencing and ribosome profiling.</title>
        <authorList>
            <person name="Yang Z."/>
            <person name="Cao S."/>
            <person name="Martens C.A."/>
            <person name="Porcella S.F."/>
            <person name="Xie Z."/>
            <person name="Ma M."/>
            <person name="Shen B."/>
            <person name="Moss B."/>
        </authorList>
    </citation>
    <scope>INDUCTION</scope>
</reference>
<name>PG027_VACCW</name>
<accession>P68600</accession>
<accession>P17363</accession>
<accession>Q76ZY7</accession>
<organism>
    <name type="scientific">Vaccinia virus (strain Western Reserve)</name>
    <name type="common">VACV</name>
    <name type="synonym">Vaccinia virus (strain WR)</name>
    <dbReference type="NCBI Taxonomy" id="10254"/>
    <lineage>
        <taxon>Viruses</taxon>
        <taxon>Varidnaviria</taxon>
        <taxon>Bamfordvirae</taxon>
        <taxon>Nucleocytoviricota</taxon>
        <taxon>Pokkesviricetes</taxon>
        <taxon>Chitovirales</taxon>
        <taxon>Poxviridae</taxon>
        <taxon>Chordopoxvirinae</taxon>
        <taxon>Orthopoxvirus</taxon>
        <taxon>Vaccinia virus</taxon>
    </lineage>
</organism>
<dbReference type="EMBL" id="M22812">
    <property type="protein sequence ID" value="AAA69601.1"/>
    <property type="molecule type" value="Genomic_DNA"/>
</dbReference>
<dbReference type="EMBL" id="AY243312">
    <property type="protein sequence ID" value="AAO89300.1"/>
    <property type="molecule type" value="Genomic_DNA"/>
</dbReference>
<dbReference type="PIR" id="A33348">
    <property type="entry name" value="WZVZB1"/>
</dbReference>
<dbReference type="RefSeq" id="YP_232903.1">
    <property type="nucleotide sequence ID" value="NC_006998.1"/>
</dbReference>
<dbReference type="SMR" id="P68600"/>
<dbReference type="DNASU" id="3707636"/>
<dbReference type="GeneID" id="3707636"/>
<dbReference type="KEGG" id="vg:3707636"/>
<dbReference type="Proteomes" id="UP000000344">
    <property type="component" value="Genome"/>
</dbReference>
<dbReference type="GO" id="GO:0052170">
    <property type="term" value="P:symbiont-mediated suppression of host innate immune response"/>
    <property type="evidence" value="ECO:0007669"/>
    <property type="project" value="UniProtKB-KW"/>
</dbReference>
<dbReference type="GO" id="GO:0016032">
    <property type="term" value="P:viral process"/>
    <property type="evidence" value="ECO:0007669"/>
    <property type="project" value="InterPro"/>
</dbReference>
<dbReference type="InterPro" id="IPR004967">
    <property type="entry name" value="Poxvirus_C7/F8A"/>
</dbReference>
<dbReference type="Pfam" id="PF03287">
    <property type="entry name" value="Pox_C7_F8A"/>
    <property type="match status" value="1"/>
</dbReference>
<dbReference type="PIRSF" id="PIRSF003779">
    <property type="entry name" value="VAC_C7L"/>
    <property type="match status" value="1"/>
</dbReference>
<proteinExistence type="evidence at transcript level"/>
<evidence type="ECO:0000269" key="1">
    <source>
    </source>
</evidence>
<evidence type="ECO:0000269" key="2">
    <source>
    </source>
</evidence>
<evidence type="ECO:0000269" key="3">
    <source>
    </source>
</evidence>
<evidence type="ECO:0000269" key="4">
    <source>
    </source>
</evidence>
<evidence type="ECO:0000305" key="5"/>
<sequence>MGIQHEFDIIINGDIALRNLQLHKGDNYGCKLKIISNDYKKLKFRFIIRPDWSEIDEVKGLTVFANNYAVKVNKVDDTFYYVIYEAVIHLYNKKTEILIYSDDENELFKHYYPYISLNMISKKYKVKEENYSSPYIEHPLIPYRDYESMD</sequence>
<gene>
    <name type="primary">OPG027</name>
    <name type="synonym">C7L</name>
    <name type="ORF">VACWR021</name>
</gene>
<feature type="chain" id="PRO_0000099388" description="Interferon antagonist OPG027">
    <location>
        <begin position="1"/>
        <end position="150"/>
    </location>
</feature>
<protein>
    <recommendedName>
        <fullName>Interferon antagonist OPG027</fullName>
    </recommendedName>
    <alternativeName>
        <fullName>Host range protein 2</fullName>
    </alternativeName>
</protein>
<keyword id="KW-0244">Early protein</keyword>
<keyword id="KW-0945">Host-virus interaction</keyword>
<keyword id="KW-1090">Inhibition of host innate immune response by virus</keyword>
<keyword id="KW-1185">Reference proteome</keyword>
<keyword id="KW-0899">Viral immunoevasion</keyword>
<organismHost>
    <name type="scientific">Bos taurus</name>
    <name type="common">Bovine</name>
    <dbReference type="NCBI Taxonomy" id="9913"/>
</organismHost>
<comment type="function">
    <text evidence="1 2 4">Inhibits antiviral activity induced by type I interferons. Does not block signal transduction of IFN, but is important to counteract the host antiviral state induced by a pre-treatment with IFN.</text>
</comment>
<comment type="induction">
    <text evidence="3">Expressed in the early phase of the viral replicative cycle.</text>
</comment>
<comment type="similarity">
    <text evidence="5">Belongs to the orthopoxvirus OPG027 family.</text>
</comment>